<reference key="1">
    <citation type="journal article" date="2012" name="J. Proteomics">
        <title>Large-scale discovery of conopeptides and conoproteins in the injectable venom of a fish-hunting cone snail using a combined proteomic and transcriptomic approach.</title>
        <authorList>
            <person name="Violette A."/>
            <person name="Biass D."/>
            <person name="Dutertre S."/>
            <person name="Koua D."/>
            <person name="Piquemal D."/>
            <person name="Pierrat F."/>
            <person name="Stocklin R."/>
            <person name="Favreau P."/>
        </authorList>
    </citation>
    <scope>NUCLEOTIDE SEQUENCE [MRNA]</scope>
    <scope>OXIDATION AT MET-40</scope>
    <scope>MASS SPECTROMETRY</scope>
    <scope>IDENTIFICATION BY MASS SPECTROMETRY</scope>
    <scope>SUBCELLULAR LOCATION</scope>
    <source>
        <tissue>Venom</tissue>
        <tissue>Venom duct</tissue>
    </source>
</reference>
<name>CXL_CONCN</name>
<proteinExistence type="evidence at protein level"/>
<protein>
    <recommendedName>
        <fullName evidence="4">Linear conopeptide</fullName>
    </recommendedName>
    <component>
        <recommendedName>
            <fullName evidence="4">Linear conopeptide-Cn1</fullName>
        </recommendedName>
    </component>
    <component>
        <recommendedName>
            <fullName evidence="4">Linear conopeptide-Cn2</fullName>
        </recommendedName>
        <alternativeName>
            <fullName evidence="4">[oxMet6]-Cn2</fullName>
        </alternativeName>
    </component>
    <component>
        <recommendedName>
            <fullName evidence="4">Linear conopeptide-Cn3</fullName>
        </recommendedName>
    </component>
    <component>
        <recommendedName>
            <fullName evidence="4">Linear conopeptide-Cn4</fullName>
        </recommendedName>
    </component>
</protein>
<feature type="signal peptide" evidence="1">
    <location>
        <begin position="1"/>
        <end position="19"/>
    </location>
</feature>
<feature type="propeptide" id="PRO_0000419890" evidence="6">
    <location>
        <begin position="20"/>
        <end position="34"/>
    </location>
</feature>
<feature type="peptide" id="PRO_0000419891" description="Linear conopeptide-Cn2" evidence="3">
    <location>
        <begin position="35"/>
        <end position="57"/>
    </location>
</feature>
<feature type="peptide" id="PRO_0000419892" description="Linear conopeptide-Cn1" evidence="3">
    <location>
        <begin position="36"/>
        <end position="57"/>
    </location>
</feature>
<feature type="propeptide" id="PRO_0000419893" evidence="6">
    <location>
        <begin position="58"/>
        <end position="80"/>
    </location>
</feature>
<feature type="peptide" id="PRO_0000419894" description="Linear conopeptide-Cn4" evidence="3">
    <location>
        <begin position="81"/>
        <end position="103"/>
    </location>
</feature>
<feature type="peptide" id="PRO_0000419895" description="Linear conopeptide-Cn3" evidence="3">
    <location>
        <begin position="87"/>
        <end position="103"/>
    </location>
</feature>
<feature type="propeptide" id="PRO_0000419896" evidence="6">
    <location>
        <begin position="104"/>
        <end position="146"/>
    </location>
</feature>
<feature type="region of interest" description="Disordered" evidence="2">
    <location>
        <begin position="107"/>
        <end position="146"/>
    </location>
</feature>
<feature type="compositionally biased region" description="Basic and acidic residues" evidence="2">
    <location>
        <begin position="135"/>
        <end position="146"/>
    </location>
</feature>
<feature type="modified residue" description="Methionine sulfoxide; partial; in Cn2" evidence="3">
    <location>
        <position position="40"/>
    </location>
</feature>
<accession>P0DKQ7</accession>
<keyword id="KW-0165">Cleavage on pair of basic residues</keyword>
<keyword id="KW-0558">Oxidation</keyword>
<keyword id="KW-0964">Secreted</keyword>
<keyword id="KW-0732">Signal</keyword>
<keyword id="KW-0800">Toxin</keyword>
<sequence length="146" mass="16367">MLRLIIAAAVLVSACLAYPQRREGAPADAANLQSFDPALMSMQGMQGGQMPGMAGGQFLPFNPNLQMGYKRDFDENLEKRKQHSQFNADENKAPFDSEENFMNFLHNEKGDKHPFANVDSADTDLGQFEPSAENKNGEFRFFDKEQ</sequence>
<comment type="subcellular location">
    <subcellularLocation>
        <location evidence="3">Secreted</location>
    </subcellularLocation>
</comment>
<comment type="tissue specificity">
    <text evidence="6">Expressed by the venom duct.</text>
</comment>
<comment type="mass spectrometry" mass="2325.88" method="Electrospray" evidence="3">
    <molecule>Linear conopeptide-Cn2</molecule>
    <text>Cn2.</text>
</comment>
<comment type="mass spectrometry" mass="2341.9" method="Electrospray" evidence="3">
    <molecule>Linear conopeptide-Cn2</molecule>
    <text>[oxMet]-Cn2.</text>
</comment>
<comment type="mass spectrometry" mass="2178.89" method="Electrospray" evidence="3">
    <molecule>Linear conopeptide-Cn1</molecule>
    <text>Cn1.</text>
</comment>
<comment type="mass spectrometry" mass="2726.09" method="Electrospray" evidence="3">
    <molecule>Linear conopeptide-Cn4</molecule>
    <text>Cn4.</text>
</comment>
<comment type="mass spectrometry" mass="1970.76" method="Electrospray" evidence="3">
    <molecule>Linear conopeptide-Cn3</molecule>
    <text>Cn3.</text>
</comment>
<comment type="miscellaneous">
    <text evidence="6">Found in injectable (milked) (IV) venom.</text>
</comment>
<comment type="miscellaneous">
    <text evidence="5">The mature peptide does not contain cysteine residue.</text>
</comment>
<organism>
    <name type="scientific">Conus consors</name>
    <name type="common">Singed cone</name>
    <dbReference type="NCBI Taxonomy" id="101297"/>
    <lineage>
        <taxon>Eukaryota</taxon>
        <taxon>Metazoa</taxon>
        <taxon>Spiralia</taxon>
        <taxon>Lophotrochozoa</taxon>
        <taxon>Mollusca</taxon>
        <taxon>Gastropoda</taxon>
        <taxon>Caenogastropoda</taxon>
        <taxon>Neogastropoda</taxon>
        <taxon>Conoidea</taxon>
        <taxon>Conidae</taxon>
        <taxon>Conus</taxon>
        <taxon>Pionoconus</taxon>
    </lineage>
</organism>
<evidence type="ECO:0000255" key="1"/>
<evidence type="ECO:0000256" key="2">
    <source>
        <dbReference type="SAM" id="MobiDB-lite"/>
    </source>
</evidence>
<evidence type="ECO:0000269" key="3">
    <source>
    </source>
</evidence>
<evidence type="ECO:0000303" key="4">
    <source>
    </source>
</evidence>
<evidence type="ECO:0000305" key="5"/>
<evidence type="ECO:0000305" key="6">
    <source>
    </source>
</evidence>
<dbReference type="GO" id="GO:0005576">
    <property type="term" value="C:extracellular region"/>
    <property type="evidence" value="ECO:0007669"/>
    <property type="project" value="UniProtKB-SubCell"/>
</dbReference>
<dbReference type="GO" id="GO:0090729">
    <property type="term" value="F:toxin activity"/>
    <property type="evidence" value="ECO:0007669"/>
    <property type="project" value="UniProtKB-KW"/>
</dbReference>